<evidence type="ECO:0000250" key="1"/>
<evidence type="ECO:0000250" key="2">
    <source>
        <dbReference type="UniProtKB" id="Q96JJ3"/>
    </source>
</evidence>
<evidence type="ECO:0000255" key="3">
    <source>
        <dbReference type="PROSITE-ProRule" id="PRU00664"/>
    </source>
</evidence>
<evidence type="ECO:0000269" key="4">
    <source>
    </source>
</evidence>
<evidence type="ECO:0000303" key="5">
    <source>
    </source>
</evidence>
<evidence type="ECO:0000303" key="6">
    <source>
    </source>
</evidence>
<evidence type="ECO:0000305" key="7"/>
<evidence type="ECO:0007744" key="8">
    <source>
    </source>
</evidence>
<evidence type="ECO:0007744" key="9">
    <source>
    </source>
</evidence>
<evidence type="ECO:0007829" key="10">
    <source>
        <dbReference type="PDB" id="6UKA"/>
    </source>
</evidence>
<feature type="chain" id="PRO_0000153715" description="Engulfment and cell motility protein 2">
    <location>
        <begin position="1"/>
        <end position="732"/>
    </location>
</feature>
<feature type="domain" description="ELMO" evidence="3">
    <location>
        <begin position="323"/>
        <end position="497"/>
    </location>
</feature>
<feature type="domain" description="PH">
    <location>
        <begin position="565"/>
        <end position="686"/>
    </location>
</feature>
<feature type="short sequence motif" description="SH3-binding">
    <location>
        <begin position="712"/>
        <end position="719"/>
    </location>
</feature>
<feature type="modified residue" description="Phosphotyrosine" evidence="8 9">
    <location>
        <position position="48"/>
    </location>
</feature>
<feature type="modified residue" description="Phosphoserine" evidence="2">
    <location>
        <position position="515"/>
    </location>
</feature>
<feature type="modified residue" description="Phosphotyrosine" evidence="8">
    <location>
        <position position="729"/>
    </location>
</feature>
<feature type="splice variant" id="VSP_007488" description="In isoform 2 and isoform 3." evidence="5 6">
    <location>
        <begin position="253"/>
        <end position="264"/>
    </location>
</feature>
<feature type="splice variant" id="VSP_007489" description="In isoform 3." evidence="6">
    <original>YCIWIDGLSALLGKDMSSELTKSDLDTLLSMEMKLRLLDLENIQIPEAPPPVPKEPSSYDFVYHYG</original>
    <variation>VSSVPHCLEHQCPHCEEVSVPHCLEHQCSHCEEVWPAQRYPHKPGSQNGSLSLWTFYHWAGLPTSHRGLSSSAFRGLGLELCATTPNLSLCALEQLAWHREGFPLCNLAVTFPRRVESQLPGANLVRLWSQMDLPLLTRDSQFT</variation>
    <location>
        <begin position="667"/>
        <end position="732"/>
    </location>
</feature>
<feature type="sequence conflict" description="In Ref. 2; BAC28514." evidence="7" ref="2">
    <original>D</original>
    <variation>G</variation>
    <location>
        <position position="102"/>
    </location>
</feature>
<feature type="sequence conflict" description="In Ref. 1; AAL14465." evidence="7" ref="1">
    <location>
        <begin position="143"/>
        <end position="144"/>
    </location>
</feature>
<feature type="sequence conflict" description="In Ref. 2; BAC29162." evidence="7" ref="2">
    <original>ILRLR</original>
    <variation>NSAVA</variation>
    <location>
        <begin position="519"/>
        <end position="523"/>
    </location>
</feature>
<feature type="sequence conflict" description="In Ref. 5; BAC41483." evidence="7" ref="5">
    <original>I</original>
    <variation>V</variation>
    <location>
        <position position="613"/>
    </location>
</feature>
<feature type="sequence conflict" description="In Ref. 2; BAC34424." evidence="7" ref="2">
    <original>M</original>
    <variation>I</variation>
    <location>
        <position position="682"/>
    </location>
</feature>
<feature type="strand" evidence="10">
    <location>
        <begin position="7"/>
        <end position="13"/>
    </location>
</feature>
<feature type="strand" evidence="10">
    <location>
        <begin position="20"/>
        <end position="25"/>
    </location>
</feature>
<feature type="helix" evidence="10">
    <location>
        <begin position="30"/>
        <end position="40"/>
    </location>
</feature>
<feature type="helix" evidence="10">
    <location>
        <begin position="46"/>
        <end position="48"/>
    </location>
</feature>
<feature type="strand" evidence="10">
    <location>
        <begin position="49"/>
        <end position="53"/>
    </location>
</feature>
<feature type="turn" evidence="10">
    <location>
        <begin position="63"/>
        <end position="65"/>
    </location>
</feature>
<feature type="helix" evidence="10">
    <location>
        <begin position="66"/>
        <end position="68"/>
    </location>
</feature>
<feature type="strand" evidence="10">
    <location>
        <begin position="73"/>
        <end position="79"/>
    </location>
</feature>
<organism>
    <name type="scientific">Mus musculus</name>
    <name type="common">Mouse</name>
    <dbReference type="NCBI Taxonomy" id="10090"/>
    <lineage>
        <taxon>Eukaryota</taxon>
        <taxon>Metazoa</taxon>
        <taxon>Chordata</taxon>
        <taxon>Craniata</taxon>
        <taxon>Vertebrata</taxon>
        <taxon>Euteleostomi</taxon>
        <taxon>Mammalia</taxon>
        <taxon>Eutheria</taxon>
        <taxon>Euarchontoglires</taxon>
        <taxon>Glires</taxon>
        <taxon>Rodentia</taxon>
        <taxon>Myomorpha</taxon>
        <taxon>Muroidea</taxon>
        <taxon>Muridae</taxon>
        <taxon>Murinae</taxon>
        <taxon>Mus</taxon>
        <taxon>Mus</taxon>
    </lineage>
</organism>
<accession>Q8BHL5</accession>
<accession>A2A5A6</accession>
<accession>Q5GMG3</accession>
<accession>Q8BHL9</accession>
<accession>Q8BQG1</accession>
<accession>Q8CBM8</accession>
<accession>Q8CC50</accession>
<accession>Q8CH98</accession>
<accession>Q91ZU2</accession>
<accession>Q9CT75</accession>
<keyword id="KW-0002">3D-structure</keyword>
<keyword id="KW-0025">Alternative splicing</keyword>
<keyword id="KW-0053">Apoptosis</keyword>
<keyword id="KW-0963">Cytoplasm</keyword>
<keyword id="KW-0472">Membrane</keyword>
<keyword id="KW-0581">Phagocytosis</keyword>
<keyword id="KW-0597">Phosphoprotein</keyword>
<keyword id="KW-1185">Reference proteome</keyword>
<keyword id="KW-0729">SH3-binding</keyword>
<gene>
    <name type="primary">Elmo2</name>
    <name type="synonym">Kiaa1834</name>
</gene>
<proteinExistence type="evidence at protein level"/>
<dbReference type="EMBL" id="AF398884">
    <property type="protein sequence ID" value="AAL14465.1"/>
    <property type="molecule type" value="mRNA"/>
</dbReference>
<dbReference type="EMBL" id="AK004448">
    <property type="protein sequence ID" value="BAB23307.1"/>
    <property type="molecule type" value="mRNA"/>
</dbReference>
<dbReference type="EMBL" id="AK032033">
    <property type="protein sequence ID" value="BAC27662.1"/>
    <property type="molecule type" value="mRNA"/>
</dbReference>
<dbReference type="EMBL" id="AK033918">
    <property type="protein sequence ID" value="BAC28514.1"/>
    <property type="molecule type" value="mRNA"/>
</dbReference>
<dbReference type="EMBL" id="AK035710">
    <property type="protein sequence ID" value="BAC29162.1"/>
    <property type="molecule type" value="mRNA"/>
</dbReference>
<dbReference type="EMBL" id="AK038455">
    <property type="protein sequence ID" value="BAC30007.1"/>
    <property type="molecule type" value="mRNA"/>
</dbReference>
<dbReference type="EMBL" id="AK045428">
    <property type="protein sequence ID" value="BAC32361.1"/>
    <property type="molecule type" value="mRNA"/>
</dbReference>
<dbReference type="EMBL" id="AK047040">
    <property type="protein sequence ID" value="BAC32945.1"/>
    <property type="molecule type" value="mRNA"/>
</dbReference>
<dbReference type="EMBL" id="AK050823">
    <property type="protein sequence ID" value="BAC34424.1"/>
    <property type="molecule type" value="mRNA"/>
</dbReference>
<dbReference type="EMBL" id="AK053574">
    <property type="protein sequence ID" value="BAC35433.1"/>
    <property type="molecule type" value="mRNA"/>
</dbReference>
<dbReference type="EMBL" id="AL591430">
    <property type="status" value="NOT_ANNOTATED_CDS"/>
    <property type="molecule type" value="Genomic_DNA"/>
</dbReference>
<dbReference type="EMBL" id="BC023954">
    <property type="protein sequence ID" value="AAH23954.1"/>
    <property type="molecule type" value="mRNA"/>
</dbReference>
<dbReference type="EMBL" id="AB093301">
    <property type="protein sequence ID" value="BAC41483.3"/>
    <property type="molecule type" value="Transcribed_RNA"/>
</dbReference>
<dbReference type="CCDS" id="CCDS17075.1">
    <molecule id="Q8BHL5-2"/>
</dbReference>
<dbReference type="CCDS" id="CCDS17076.1">
    <molecule id="Q8BHL5-1"/>
</dbReference>
<dbReference type="RefSeq" id="NP_001289681.1">
    <molecule id="Q8BHL5-2"/>
    <property type="nucleotide sequence ID" value="NM_001302752.1"/>
</dbReference>
<dbReference type="RefSeq" id="NP_001289683.1">
    <property type="nucleotide sequence ID" value="NM_001302754.1"/>
</dbReference>
<dbReference type="RefSeq" id="NP_525026.2">
    <molecule id="Q8BHL5-2"/>
    <property type="nucleotide sequence ID" value="NM_080287.2"/>
</dbReference>
<dbReference type="RefSeq" id="NP_997589.1">
    <molecule id="Q8BHL5-1"/>
    <property type="nucleotide sequence ID" value="NM_207706.1"/>
</dbReference>
<dbReference type="RefSeq" id="XP_011237586.1">
    <molecule id="Q8BHL5-1"/>
    <property type="nucleotide sequence ID" value="XM_011239284.2"/>
</dbReference>
<dbReference type="RefSeq" id="XP_011237587.1">
    <molecule id="Q8BHL5-1"/>
    <property type="nucleotide sequence ID" value="XM_011239285.2"/>
</dbReference>
<dbReference type="RefSeq" id="XP_011237588.1">
    <molecule id="Q8BHL5-2"/>
    <property type="nucleotide sequence ID" value="XM_011239286.4"/>
</dbReference>
<dbReference type="RefSeq" id="XP_017170976.1">
    <molecule id="Q8BHL5-1"/>
    <property type="nucleotide sequence ID" value="XM_017315487.2"/>
</dbReference>
<dbReference type="RefSeq" id="XP_036014165.1">
    <molecule id="Q8BHL5-2"/>
    <property type="nucleotide sequence ID" value="XM_036158272.1"/>
</dbReference>
<dbReference type="PDB" id="6UKA">
    <property type="method" value="X-ray"/>
    <property type="resolution" value="2.40 A"/>
    <property type="chains" value="B=1-80"/>
</dbReference>
<dbReference type="PDBsum" id="6UKA"/>
<dbReference type="SMR" id="Q8BHL5"/>
<dbReference type="BioGRID" id="228287">
    <property type="interactions" value="1"/>
</dbReference>
<dbReference type="FunCoup" id="Q8BHL5">
    <property type="interactions" value="2165"/>
</dbReference>
<dbReference type="IntAct" id="Q8BHL5">
    <property type="interactions" value="2"/>
</dbReference>
<dbReference type="STRING" id="10090.ENSMUSP00000073691"/>
<dbReference type="iPTMnet" id="Q8BHL5"/>
<dbReference type="PhosphoSitePlus" id="Q8BHL5"/>
<dbReference type="PaxDb" id="10090-ENSMUSP00000071619"/>
<dbReference type="PeptideAtlas" id="Q8BHL5"/>
<dbReference type="ProteomicsDB" id="275598">
    <molecule id="Q8BHL5-1"/>
</dbReference>
<dbReference type="ProteomicsDB" id="275599">
    <molecule id="Q8BHL5-2"/>
</dbReference>
<dbReference type="ProteomicsDB" id="275600">
    <molecule id="Q8BHL5-3"/>
</dbReference>
<dbReference type="Pumba" id="Q8BHL5"/>
<dbReference type="Antibodypedia" id="13191">
    <property type="antibodies" value="245 antibodies from 31 providers"/>
</dbReference>
<dbReference type="DNASU" id="140579"/>
<dbReference type="Ensembl" id="ENSMUST00000071699.11">
    <molecule id="Q8BHL5-3"/>
    <property type="protein sequence ID" value="ENSMUSP00000071619.5"/>
    <property type="gene ID" value="ENSMUSG00000017670.17"/>
</dbReference>
<dbReference type="Ensembl" id="ENSMUST00000074046.13">
    <molecule id="Q8BHL5-1"/>
    <property type="protein sequence ID" value="ENSMUSP00000073691.7"/>
    <property type="gene ID" value="ENSMUSG00000017670.17"/>
</dbReference>
<dbReference type="Ensembl" id="ENSMUST00000094329.11">
    <molecule id="Q8BHL5-2"/>
    <property type="protein sequence ID" value="ENSMUSP00000091887.5"/>
    <property type="gene ID" value="ENSMUSG00000017670.17"/>
</dbReference>
<dbReference type="Ensembl" id="ENSMUST00000103088.10">
    <molecule id="Q8BHL5-3"/>
    <property type="protein sequence ID" value="ENSMUSP00000099377.4"/>
    <property type="gene ID" value="ENSMUSG00000017670.17"/>
</dbReference>
<dbReference type="Ensembl" id="ENSMUST00000103091.9">
    <molecule id="Q8BHL5-2"/>
    <property type="protein sequence ID" value="ENSMUSP00000099380.3"/>
    <property type="gene ID" value="ENSMUSG00000017670.17"/>
</dbReference>
<dbReference type="GeneID" id="140579"/>
<dbReference type="KEGG" id="mmu:140579"/>
<dbReference type="UCSC" id="uc008nxj.1">
    <molecule id="Q8BHL5-2"/>
    <property type="organism name" value="mouse"/>
</dbReference>
<dbReference type="UCSC" id="uc008nxk.1">
    <molecule id="Q8BHL5-1"/>
    <property type="organism name" value="mouse"/>
</dbReference>
<dbReference type="UCSC" id="uc008nxm.2">
    <molecule id="Q8BHL5-3"/>
    <property type="organism name" value="mouse"/>
</dbReference>
<dbReference type="AGR" id="MGI:2153045"/>
<dbReference type="CTD" id="63916"/>
<dbReference type="MGI" id="MGI:2153045">
    <property type="gene designation" value="Elmo2"/>
</dbReference>
<dbReference type="VEuPathDB" id="HostDB:ENSMUSG00000017670"/>
<dbReference type="eggNOG" id="KOG2999">
    <property type="taxonomic scope" value="Eukaryota"/>
</dbReference>
<dbReference type="GeneTree" id="ENSGT00940000159236"/>
<dbReference type="HOGENOM" id="CLU_023887_0_0_1"/>
<dbReference type="InParanoid" id="Q8BHL5"/>
<dbReference type="OMA" id="LNHKMLH"/>
<dbReference type="OrthoDB" id="17023at9989"/>
<dbReference type="PhylomeDB" id="Q8BHL5"/>
<dbReference type="TreeFam" id="TF312966"/>
<dbReference type="Reactome" id="R-MMU-2029482">
    <property type="pathway name" value="Regulation of actin dynamics for phagocytic cup formation"/>
</dbReference>
<dbReference type="Reactome" id="R-MMU-4420097">
    <property type="pathway name" value="VEGFA-VEGFR2 Pathway"/>
</dbReference>
<dbReference type="Reactome" id="R-MMU-8849471">
    <property type="pathway name" value="PTK6 Regulates RHO GTPases, RAS GTPase and MAP kinases"/>
</dbReference>
<dbReference type="Reactome" id="R-MMU-9013408">
    <property type="pathway name" value="RHOG GTPase cycle"/>
</dbReference>
<dbReference type="BioGRID-ORCS" id="140579">
    <property type="hits" value="8 hits in 78 CRISPR screens"/>
</dbReference>
<dbReference type="CD-CODE" id="CE726F99">
    <property type="entry name" value="Postsynaptic density"/>
</dbReference>
<dbReference type="ChiTaRS" id="Elmo2">
    <property type="organism name" value="mouse"/>
</dbReference>
<dbReference type="PRO" id="PR:Q8BHL5"/>
<dbReference type="Proteomes" id="UP000000589">
    <property type="component" value="Chromosome 2"/>
</dbReference>
<dbReference type="RNAct" id="Q8BHL5">
    <property type="molecule type" value="protein"/>
</dbReference>
<dbReference type="Bgee" id="ENSMUSG00000017670">
    <property type="expression patterns" value="Expressed in dentate gyrus of hippocampal formation granule cell and 292 other cell types or tissues"/>
</dbReference>
<dbReference type="ExpressionAtlas" id="Q8BHL5">
    <property type="expression patterns" value="baseline and differential"/>
</dbReference>
<dbReference type="GO" id="GO:0005829">
    <property type="term" value="C:cytosol"/>
    <property type="evidence" value="ECO:0000250"/>
    <property type="project" value="UniProtKB"/>
</dbReference>
<dbReference type="GO" id="GO:0016020">
    <property type="term" value="C:membrane"/>
    <property type="evidence" value="ECO:0000250"/>
    <property type="project" value="UniProtKB"/>
</dbReference>
<dbReference type="GO" id="GO:0030971">
    <property type="term" value="F:receptor tyrosine kinase binding"/>
    <property type="evidence" value="ECO:0007669"/>
    <property type="project" value="Ensembl"/>
</dbReference>
<dbReference type="GO" id="GO:0017124">
    <property type="term" value="F:SH3 domain binding"/>
    <property type="evidence" value="ECO:0007669"/>
    <property type="project" value="UniProtKB-KW"/>
</dbReference>
<dbReference type="GO" id="GO:0006915">
    <property type="term" value="P:apoptotic process"/>
    <property type="evidence" value="ECO:0007669"/>
    <property type="project" value="UniProtKB-KW"/>
</dbReference>
<dbReference type="GO" id="GO:0060326">
    <property type="term" value="P:cell chemotaxis"/>
    <property type="evidence" value="ECO:0000250"/>
    <property type="project" value="UniProtKB"/>
</dbReference>
<dbReference type="GO" id="GO:0006909">
    <property type="term" value="P:phagocytosis"/>
    <property type="evidence" value="ECO:0007669"/>
    <property type="project" value="UniProtKB-KW"/>
</dbReference>
<dbReference type="CDD" id="cd13359">
    <property type="entry name" value="PH_ELMO1_CED-12"/>
    <property type="match status" value="1"/>
</dbReference>
<dbReference type="FunFam" id="1.25.10.10:FF:000049">
    <property type="entry name" value="Engulfment and cell motility 1 (Ced-12 homolog)"/>
    <property type="match status" value="1"/>
</dbReference>
<dbReference type="FunFam" id="2.30.29.30:FF:000053">
    <property type="entry name" value="Engulfment and cell motility protein 1"/>
    <property type="match status" value="1"/>
</dbReference>
<dbReference type="Gene3D" id="6.10.250.810">
    <property type="match status" value="1"/>
</dbReference>
<dbReference type="Gene3D" id="1.25.10.10">
    <property type="entry name" value="Leucine-rich Repeat Variant"/>
    <property type="match status" value="1"/>
</dbReference>
<dbReference type="Gene3D" id="2.30.29.30">
    <property type="entry name" value="Pleckstrin-homology domain (PH domain)/Phosphotyrosine-binding domain (PTB)"/>
    <property type="match status" value="1"/>
</dbReference>
<dbReference type="InterPro" id="IPR011989">
    <property type="entry name" value="ARM-like"/>
</dbReference>
<dbReference type="InterPro" id="IPR016024">
    <property type="entry name" value="ARM-type_fold"/>
</dbReference>
<dbReference type="InterPro" id="IPR024574">
    <property type="entry name" value="ELMO_ARM"/>
</dbReference>
<dbReference type="InterPro" id="IPR006816">
    <property type="entry name" value="ELMO_dom"/>
</dbReference>
<dbReference type="InterPro" id="IPR050868">
    <property type="entry name" value="ELMO_domain-containing"/>
</dbReference>
<dbReference type="InterPro" id="IPR011993">
    <property type="entry name" value="PH-like_dom_sf"/>
</dbReference>
<dbReference type="InterPro" id="IPR001849">
    <property type="entry name" value="PH_domain"/>
</dbReference>
<dbReference type="PANTHER" id="PTHR12771">
    <property type="entry name" value="ENGULFMENT AND CELL MOTILITY"/>
    <property type="match status" value="1"/>
</dbReference>
<dbReference type="PANTHER" id="PTHR12771:SF8">
    <property type="entry name" value="ENGULFMENT AND CELL MOTILITY PROTEIN 2"/>
    <property type="match status" value="1"/>
</dbReference>
<dbReference type="Pfam" id="PF11841">
    <property type="entry name" value="ELMO_ARM"/>
    <property type="match status" value="1"/>
</dbReference>
<dbReference type="Pfam" id="PF04727">
    <property type="entry name" value="ELMO_CED12"/>
    <property type="match status" value="1"/>
</dbReference>
<dbReference type="Pfam" id="PF16457">
    <property type="entry name" value="PH_12"/>
    <property type="match status" value="1"/>
</dbReference>
<dbReference type="SUPFAM" id="SSF48371">
    <property type="entry name" value="ARM repeat"/>
    <property type="match status" value="1"/>
</dbReference>
<dbReference type="SUPFAM" id="SSF50729">
    <property type="entry name" value="PH domain-like"/>
    <property type="match status" value="1"/>
</dbReference>
<dbReference type="PROSITE" id="PS51335">
    <property type="entry name" value="ELMO"/>
    <property type="match status" value="1"/>
</dbReference>
<sequence length="732" mass="83887">MPPPSDIVKVAIEWPGANAQLLEIDQKRPLASIIKEVCDGWSLPNPEYYTLRYADGPQLYVTEQTRNDIKNGTILQLAVSPSRAARQLMERTQSSSMETRLDAMKELAKLSADVTFATEFINMDGIIVLTRLVESGTKLLSHYSEMLAFTLTAFLELMDHGIVSWDMVSVTFIKQIAGYVSQPMVDVSILQRSLAILESMVLNSQSLYQKIAEEITVGQLISHLQVSNQEIQTYAIALINALFLKAPEDKRQDKHLNPLDLPVTDMANAFAQKHLRSIILNHVIRGNRPIKTEMAHQLYVLQVLTFNLLEERMMTKMDPNDQAQRDIIFELRRIAFDAESDPSNVPGSGTEKRKAMYTKDYKMLGFTNHINPALDFTQTPPGMLALDNMLYLAKVHQDTYIRIVLENSSREDKHECPFGRSAIELTKMLCEILQVGELPNEGRNDYHPMFFTHDRAFEELFGICIQLLNKTWKEMRATAEDFNKVMQVVREQITRALPSKPNSLDQFKSKLRSLSYSEILRLRQSERMSQDDFQSPPIVELREKIQPEILELIKQQRLNRLCEGSSFRKIGNRRRQERFWHCRLALNHKVLHYGDLDDNPQGEVTFESLQEKIPVADIKAIVTGKDCPHMKEKSALKQNKEVLELAFSILYDPDETLNFIAPNKYEYCIWIDGLSALLGKDMSSELTKSDLDTLLSMEMKLRLLDLENIQIPEAPPPVPKEPSSYDFVYHYG</sequence>
<reference key="1">
    <citation type="journal article" date="2001" name="Cell">
        <title>CED-12/ELMO, a novel member of the CrkII/Dock180/Rac pathway, is required for phagocytosis and cell migration.</title>
        <authorList>
            <person name="Gumienny T.L."/>
            <person name="Brugnera E."/>
            <person name="Tosello-Trampont A.-C."/>
            <person name="Kinchen J.M."/>
            <person name="Haney L.B."/>
            <person name="Nishiwaki K."/>
            <person name="Walk S.F."/>
            <person name="Nemergut M.E."/>
            <person name="Macara I.G."/>
            <person name="Francis R."/>
            <person name="Schedl T."/>
            <person name="Qin Y."/>
            <person name="Van Aelst L."/>
            <person name="Hengartner M.O."/>
            <person name="Ravichandran K.S."/>
        </authorList>
    </citation>
    <scope>NUCLEOTIDE SEQUENCE [MRNA] (ISOFORM 2)</scope>
    <source>
        <strain>C3H/HeJ</strain>
    </source>
</reference>
<reference key="2">
    <citation type="journal article" date="2005" name="Science">
        <title>The transcriptional landscape of the mammalian genome.</title>
        <authorList>
            <person name="Carninci P."/>
            <person name="Kasukawa T."/>
            <person name="Katayama S."/>
            <person name="Gough J."/>
            <person name="Frith M.C."/>
            <person name="Maeda N."/>
            <person name="Oyama R."/>
            <person name="Ravasi T."/>
            <person name="Lenhard B."/>
            <person name="Wells C."/>
            <person name="Kodzius R."/>
            <person name="Shimokawa K."/>
            <person name="Bajic V.B."/>
            <person name="Brenner S.E."/>
            <person name="Batalov S."/>
            <person name="Forrest A.R."/>
            <person name="Zavolan M."/>
            <person name="Davis M.J."/>
            <person name="Wilming L.G."/>
            <person name="Aidinis V."/>
            <person name="Allen J.E."/>
            <person name="Ambesi-Impiombato A."/>
            <person name="Apweiler R."/>
            <person name="Aturaliya R.N."/>
            <person name="Bailey T.L."/>
            <person name="Bansal M."/>
            <person name="Baxter L."/>
            <person name="Beisel K.W."/>
            <person name="Bersano T."/>
            <person name="Bono H."/>
            <person name="Chalk A.M."/>
            <person name="Chiu K.P."/>
            <person name="Choudhary V."/>
            <person name="Christoffels A."/>
            <person name="Clutterbuck D.R."/>
            <person name="Crowe M.L."/>
            <person name="Dalla E."/>
            <person name="Dalrymple B.P."/>
            <person name="de Bono B."/>
            <person name="Della Gatta G."/>
            <person name="di Bernardo D."/>
            <person name="Down T."/>
            <person name="Engstrom P."/>
            <person name="Fagiolini M."/>
            <person name="Faulkner G."/>
            <person name="Fletcher C.F."/>
            <person name="Fukushima T."/>
            <person name="Furuno M."/>
            <person name="Futaki S."/>
            <person name="Gariboldi M."/>
            <person name="Georgii-Hemming P."/>
            <person name="Gingeras T.R."/>
            <person name="Gojobori T."/>
            <person name="Green R.E."/>
            <person name="Gustincich S."/>
            <person name="Harbers M."/>
            <person name="Hayashi Y."/>
            <person name="Hensch T.K."/>
            <person name="Hirokawa N."/>
            <person name="Hill D."/>
            <person name="Huminiecki L."/>
            <person name="Iacono M."/>
            <person name="Ikeo K."/>
            <person name="Iwama A."/>
            <person name="Ishikawa T."/>
            <person name="Jakt M."/>
            <person name="Kanapin A."/>
            <person name="Katoh M."/>
            <person name="Kawasawa Y."/>
            <person name="Kelso J."/>
            <person name="Kitamura H."/>
            <person name="Kitano H."/>
            <person name="Kollias G."/>
            <person name="Krishnan S.P."/>
            <person name="Kruger A."/>
            <person name="Kummerfeld S.K."/>
            <person name="Kurochkin I.V."/>
            <person name="Lareau L.F."/>
            <person name="Lazarevic D."/>
            <person name="Lipovich L."/>
            <person name="Liu J."/>
            <person name="Liuni S."/>
            <person name="McWilliam S."/>
            <person name="Madan Babu M."/>
            <person name="Madera M."/>
            <person name="Marchionni L."/>
            <person name="Matsuda H."/>
            <person name="Matsuzawa S."/>
            <person name="Miki H."/>
            <person name="Mignone F."/>
            <person name="Miyake S."/>
            <person name="Morris K."/>
            <person name="Mottagui-Tabar S."/>
            <person name="Mulder N."/>
            <person name="Nakano N."/>
            <person name="Nakauchi H."/>
            <person name="Ng P."/>
            <person name="Nilsson R."/>
            <person name="Nishiguchi S."/>
            <person name="Nishikawa S."/>
            <person name="Nori F."/>
            <person name="Ohara O."/>
            <person name="Okazaki Y."/>
            <person name="Orlando V."/>
            <person name="Pang K.C."/>
            <person name="Pavan W.J."/>
            <person name="Pavesi G."/>
            <person name="Pesole G."/>
            <person name="Petrovsky N."/>
            <person name="Piazza S."/>
            <person name="Reed J."/>
            <person name="Reid J.F."/>
            <person name="Ring B.Z."/>
            <person name="Ringwald M."/>
            <person name="Rost B."/>
            <person name="Ruan Y."/>
            <person name="Salzberg S.L."/>
            <person name="Sandelin A."/>
            <person name="Schneider C."/>
            <person name="Schoenbach C."/>
            <person name="Sekiguchi K."/>
            <person name="Semple C.A."/>
            <person name="Seno S."/>
            <person name="Sessa L."/>
            <person name="Sheng Y."/>
            <person name="Shibata Y."/>
            <person name="Shimada H."/>
            <person name="Shimada K."/>
            <person name="Silva D."/>
            <person name="Sinclair B."/>
            <person name="Sperling S."/>
            <person name="Stupka E."/>
            <person name="Sugiura K."/>
            <person name="Sultana R."/>
            <person name="Takenaka Y."/>
            <person name="Taki K."/>
            <person name="Tammoja K."/>
            <person name="Tan S.L."/>
            <person name="Tang S."/>
            <person name="Taylor M.S."/>
            <person name="Tegner J."/>
            <person name="Teichmann S.A."/>
            <person name="Ueda H.R."/>
            <person name="van Nimwegen E."/>
            <person name="Verardo R."/>
            <person name="Wei C.L."/>
            <person name="Yagi K."/>
            <person name="Yamanishi H."/>
            <person name="Zabarovsky E."/>
            <person name="Zhu S."/>
            <person name="Zimmer A."/>
            <person name="Hide W."/>
            <person name="Bult C."/>
            <person name="Grimmond S.M."/>
            <person name="Teasdale R.D."/>
            <person name="Liu E.T."/>
            <person name="Brusic V."/>
            <person name="Quackenbush J."/>
            <person name="Wahlestedt C."/>
            <person name="Mattick J.S."/>
            <person name="Hume D.A."/>
            <person name="Kai C."/>
            <person name="Sasaki D."/>
            <person name="Tomaru Y."/>
            <person name="Fukuda S."/>
            <person name="Kanamori-Katayama M."/>
            <person name="Suzuki M."/>
            <person name="Aoki J."/>
            <person name="Arakawa T."/>
            <person name="Iida J."/>
            <person name="Imamura K."/>
            <person name="Itoh M."/>
            <person name="Kato T."/>
            <person name="Kawaji H."/>
            <person name="Kawagashira N."/>
            <person name="Kawashima T."/>
            <person name="Kojima M."/>
            <person name="Kondo S."/>
            <person name="Konno H."/>
            <person name="Nakano K."/>
            <person name="Ninomiya N."/>
            <person name="Nishio T."/>
            <person name="Okada M."/>
            <person name="Plessy C."/>
            <person name="Shibata K."/>
            <person name="Shiraki T."/>
            <person name="Suzuki S."/>
            <person name="Tagami M."/>
            <person name="Waki K."/>
            <person name="Watahiki A."/>
            <person name="Okamura-Oho Y."/>
            <person name="Suzuki H."/>
            <person name="Kawai J."/>
            <person name="Hayashizaki Y."/>
        </authorList>
    </citation>
    <scope>NUCLEOTIDE SEQUENCE [LARGE SCALE MRNA] (ISOFORMS 1; 2 AND 3)</scope>
    <source>
        <strain>C57BL/6J</strain>
        <tissue>Brain</tissue>
        <tissue>Cerebellum</tissue>
        <tissue>Diencephalon</tissue>
        <tissue>Embryo</tissue>
        <tissue>Eye</tissue>
        <tissue>Hypothalamus</tissue>
        <tissue>Medulla oblongata</tissue>
        <tissue>Urinary bladder</tissue>
    </source>
</reference>
<reference key="3">
    <citation type="journal article" date="2009" name="PLoS Biol.">
        <title>Lineage-specific biology revealed by a finished genome assembly of the mouse.</title>
        <authorList>
            <person name="Church D.M."/>
            <person name="Goodstadt L."/>
            <person name="Hillier L.W."/>
            <person name="Zody M.C."/>
            <person name="Goldstein S."/>
            <person name="She X."/>
            <person name="Bult C.J."/>
            <person name="Agarwala R."/>
            <person name="Cherry J.L."/>
            <person name="DiCuccio M."/>
            <person name="Hlavina W."/>
            <person name="Kapustin Y."/>
            <person name="Meric P."/>
            <person name="Maglott D."/>
            <person name="Birtle Z."/>
            <person name="Marques A.C."/>
            <person name="Graves T."/>
            <person name="Zhou S."/>
            <person name="Teague B."/>
            <person name="Potamousis K."/>
            <person name="Churas C."/>
            <person name="Place M."/>
            <person name="Herschleb J."/>
            <person name="Runnheim R."/>
            <person name="Forrest D."/>
            <person name="Amos-Landgraf J."/>
            <person name="Schwartz D.C."/>
            <person name="Cheng Z."/>
            <person name="Lindblad-Toh K."/>
            <person name="Eichler E.E."/>
            <person name="Ponting C.P."/>
        </authorList>
    </citation>
    <scope>NUCLEOTIDE SEQUENCE [LARGE SCALE GENOMIC DNA]</scope>
    <source>
        <strain>C57BL/6J</strain>
    </source>
</reference>
<reference key="4">
    <citation type="journal article" date="2004" name="Genome Res.">
        <title>The status, quality, and expansion of the NIH full-length cDNA project: the Mammalian Gene Collection (MGC).</title>
        <authorList>
            <consortium name="The MGC Project Team"/>
        </authorList>
    </citation>
    <scope>NUCLEOTIDE SEQUENCE [LARGE SCALE MRNA] (ISOFORM 1)</scope>
    <source>
        <strain>FVB/N</strain>
        <tissue>Mammary tumor</tissue>
    </source>
</reference>
<reference key="5">
    <citation type="journal article" date="2002" name="DNA Res.">
        <title>Prediction of the coding sequences of mouse homologues of KIAA gene: I. The complete nucleotide sequences of 100 mouse KIAA-homologous cDNAs identified by screening of terminal sequences of cDNA clones randomly sampled from size-fractionated libraries.</title>
        <authorList>
            <person name="Okazaki N."/>
            <person name="Kikuno R."/>
            <person name="Ohara R."/>
            <person name="Inamoto S."/>
            <person name="Hara Y."/>
            <person name="Nagase T."/>
            <person name="Ohara O."/>
            <person name="Koga H."/>
        </authorList>
    </citation>
    <scope>NUCLEOTIDE SEQUENCE [LARGE SCALE MRNA] OF 265-732</scope>
    <source>
        <tissue>Brain</tissue>
    </source>
</reference>
<reference key="6">
    <citation type="journal article" date="2005" name="Nat. Biotechnol.">
        <title>Immunoaffinity profiling of tyrosine phosphorylation in cancer cells.</title>
        <authorList>
            <person name="Rush J."/>
            <person name="Moritz A."/>
            <person name="Lee K.A."/>
            <person name="Guo A."/>
            <person name="Goss V.L."/>
            <person name="Spek E.J."/>
            <person name="Zhang H."/>
            <person name="Zha X.-M."/>
            <person name="Polakiewicz R.D."/>
            <person name="Comb M.J."/>
        </authorList>
    </citation>
    <scope>IDENTIFICATION BY MASS SPECTROMETRY [LARGE SCALE ANALYSIS]</scope>
</reference>
<reference key="7">
    <citation type="journal article" date="2007" name="J. Immunol.">
        <title>Quantitative time-resolved phosphoproteomic analysis of mast cell signaling.</title>
        <authorList>
            <person name="Cao L."/>
            <person name="Yu K."/>
            <person name="Banh C."/>
            <person name="Nguyen V."/>
            <person name="Ritz A."/>
            <person name="Raphael B.J."/>
            <person name="Kawakami Y."/>
            <person name="Kawakami T."/>
            <person name="Salomon A.R."/>
        </authorList>
    </citation>
    <scope>PHOSPHORYLATION [LARGE SCALE ANALYSIS] AT TYR-48 AND TYR-729</scope>
    <scope>IDENTIFICATION BY MASS SPECTROMETRY [LARGE SCALE ANALYSIS]</scope>
    <source>
        <tissue>Mast cell</tissue>
    </source>
</reference>
<reference key="8">
    <citation type="journal article" date="2008" name="J. Proteome Res.">
        <title>Large-scale identification and evolution indexing of tyrosine phosphorylation sites from murine brain.</title>
        <authorList>
            <person name="Ballif B.A."/>
            <person name="Carey G.R."/>
            <person name="Sunyaev S.R."/>
            <person name="Gygi S.P."/>
        </authorList>
    </citation>
    <scope>PHOSPHORYLATION [LARGE SCALE ANALYSIS] AT TYR-48</scope>
    <scope>IDENTIFICATION BY MASS SPECTROMETRY [LARGE SCALE ANALYSIS]</scope>
    <source>
        <tissue>Brain</tissue>
    </source>
</reference>
<reference key="9">
    <citation type="journal article" date="2010" name="Cell">
        <title>A tissue-specific atlas of mouse protein phosphorylation and expression.</title>
        <authorList>
            <person name="Huttlin E.L."/>
            <person name="Jedrychowski M.P."/>
            <person name="Elias J.E."/>
            <person name="Goswami T."/>
            <person name="Rad R."/>
            <person name="Beausoleil S.A."/>
            <person name="Villen J."/>
            <person name="Haas W."/>
            <person name="Sowa M.E."/>
            <person name="Gygi S.P."/>
        </authorList>
    </citation>
    <scope>IDENTIFICATION BY MASS SPECTROMETRY [LARGE SCALE ANALYSIS]</scope>
    <source>
        <tissue>Brain</tissue>
        <tissue>Brown adipose tissue</tissue>
        <tissue>Kidney</tissue>
        <tissue>Liver</tissue>
        <tissue>Lung</tissue>
        <tissue>Spleen</tissue>
        <tissue>Testis</tissue>
    </source>
</reference>
<reference key="10">
    <citation type="journal article" date="2014" name="Cell Rep.">
        <title>Cytoskeletal regulation by AUTS2 in neuronal migration and neuritogenesis.</title>
        <authorList>
            <person name="Hori K."/>
            <person name="Nagai T."/>
            <person name="Shan W."/>
            <person name="Sakamoto A."/>
            <person name="Taya S."/>
            <person name="Hashimoto R."/>
            <person name="Hayashi T."/>
            <person name="Abe M."/>
            <person name="Yamazaki M."/>
            <person name="Nakao K."/>
            <person name="Nishioka T."/>
            <person name="Sakimura K."/>
            <person name="Yamada K."/>
            <person name="Kaibuchi K."/>
            <person name="Hoshino M."/>
        </authorList>
    </citation>
    <scope>INTERACTION WITH AUTS2 AND DOCK1</scope>
</reference>
<name>ELMO2_MOUSE</name>
<protein>
    <recommendedName>
        <fullName>Engulfment and cell motility protein 2</fullName>
    </recommendedName>
    <alternativeName>
        <fullName>Protein ced-12 homolog A</fullName>
    </alternativeName>
</protein>
<comment type="function">
    <text evidence="1">Involved in cytoskeletal rearrangements required for phagocytosis of apoptotic cells and cell motility. Acts in association with DOCK1 and CRK. Was initially proposed to be required in complex with DOCK1 to activate Rac Rho small GTPases. May enhance the guanine nucleotide exchange factor (GEF) activity of DOCK1 (By similarity).</text>
</comment>
<comment type="subunit">
    <text evidence="2 4">Interacts directly with the SH3-domain of DOCK1 via its SH3-binding site (PubMed:25533347). Probably forms a heterotrimeric complex with DOCK1 and RAC1. Interacts with ARHGEF16, DOCK4 and EPHA2; mediates activation of RAC1 by EPHA2 (By similarity). Interacts with ADGRB3 (By similarity). Interacts with AUTS2; the interaction is direct (PubMed:25533347).</text>
</comment>
<comment type="subcellular location">
    <subcellularLocation>
        <location evidence="2">Cytoplasm</location>
    </subcellularLocation>
    <subcellularLocation>
        <location evidence="2">Cytoplasm</location>
        <location evidence="2">Cytosol</location>
    </subcellularLocation>
    <subcellularLocation>
        <location evidence="2">Membrane</location>
    </subcellularLocation>
</comment>
<comment type="alternative products">
    <event type="alternative splicing"/>
    <isoform>
        <id>Q8BHL5-1</id>
        <name>1</name>
        <sequence type="displayed"/>
    </isoform>
    <isoform>
        <id>Q8BHL5-2</id>
        <name>2</name>
        <sequence type="described" ref="VSP_007488"/>
    </isoform>
    <isoform>
        <id>Q8BHL5-3</id>
        <name>3</name>
        <sequence type="described" ref="VSP_007488 VSP_007489"/>
    </isoform>
</comment>